<gene>
    <name type="primary">HSP70</name>
</gene>
<name>HSP70_DAVTA</name>
<organism>
    <name type="scientific">Davidiella tassiana</name>
    <name type="common">Mycosphaerella tassiana</name>
    <name type="synonym">Cladosporium herbarum</name>
    <dbReference type="NCBI Taxonomy" id="29918"/>
    <lineage>
        <taxon>Eukaryota</taxon>
        <taxon>Fungi</taxon>
        <taxon>Dikarya</taxon>
        <taxon>Ascomycota</taxon>
        <taxon>Pezizomycotina</taxon>
        <taxon>Dothideomycetes</taxon>
        <taxon>Dothideomycetidae</taxon>
        <taxon>Cladosporiales</taxon>
        <taxon>Cladosporiaceae</taxon>
        <taxon>Cladosporium</taxon>
    </lineage>
</organism>
<accession>P40918</accession>
<sequence>MAPAIGIDLGTTYSCVGIYRDDRIEIIANDQGNRTTPSFVAFTDTERLIGDSAKNQVAINPHNTVFDAKRLIGRKFQDAEVQADMKHFPFKVIEKAGKPVTQVEFKGETKDFTPEEISSMILTKMRETAESYLGGTVNNAVITVPAYFNDSQRQATKDAGLIAGLNVLRIINEPTAAAIAYGLDKKQEGEKNVLIFDLGGGTFDVSFLTIEEGIFEVKSTAGDTHLGGEDFDNRLVNHFSNEFKRKHKKDLSDNARALRRLRTACERAKRTLSSSAQTSIEIDSLFEGIDFFTSNTRARFEEVGQDLFRGNMEPGERTLRDDKIDKSSVHEIVLGGGSTRIPKVQKLVSDFFNGKEPCKSINPDEAVAYGAAVQAAILSGDTSSKSTKEILLLDVAPLSLGIETAGGVMTALIKRNTTIPTKKSETFSTFSDNQPGVLIQVFEGERARTKDINLMGKFELSGIRPAPRGVPQIEVTFDLDANGIMNVSALEKGTGKTNKIVITNDKGRLSKEEIERMLADAEKYKEEDEAEAGRIQAKNGLESYAYSLKNTVSDPKVEEKLSAEDKETLTGAIDKTVAWIDENQTATKEEYEAEQKQLESVANPVMMKIYGAEGGAPGGMPGQGAGAPPPGAGDDGPTVEEVD</sequence>
<evidence type="ECO:0000256" key="1">
    <source>
        <dbReference type="SAM" id="MobiDB-lite"/>
    </source>
</evidence>
<evidence type="ECO:0000305" key="2"/>
<reference key="1">
    <citation type="submission" date="1994-09" db="EMBL/GenBank/DDBJ databases">
        <title>Sequence and IgE-binding sites of an allergen, Cla h IV, of Cladosporium herbarum.</title>
        <authorList>
            <person name="Zhang L."/>
        </authorList>
    </citation>
    <scope>NUCLEOTIDE SEQUENCE [MRNA]</scope>
</reference>
<keyword id="KW-0020">Allergen</keyword>
<keyword id="KW-0067">ATP-binding</keyword>
<keyword id="KW-0143">Chaperone</keyword>
<keyword id="KW-0547">Nucleotide-binding</keyword>
<keyword id="KW-0346">Stress response</keyword>
<dbReference type="EMBL" id="X81860">
    <property type="protein sequence ID" value="CAA57452.1"/>
    <property type="molecule type" value="mRNA"/>
</dbReference>
<dbReference type="PIR" id="S49303">
    <property type="entry name" value="S49303"/>
</dbReference>
<dbReference type="SMR" id="P40918"/>
<dbReference type="Allergome" id="765">
    <property type="allergen name" value="Cla h HSP70"/>
</dbReference>
<dbReference type="GO" id="GO:0005524">
    <property type="term" value="F:ATP binding"/>
    <property type="evidence" value="ECO:0007669"/>
    <property type="project" value="UniProtKB-KW"/>
</dbReference>
<dbReference type="GO" id="GO:0140662">
    <property type="term" value="F:ATP-dependent protein folding chaperone"/>
    <property type="evidence" value="ECO:0007669"/>
    <property type="project" value="InterPro"/>
</dbReference>
<dbReference type="CDD" id="cd10233">
    <property type="entry name" value="ASKHA_NBD_HSP70_HSPA1"/>
    <property type="match status" value="1"/>
</dbReference>
<dbReference type="FunFam" id="2.60.34.10:FF:000002">
    <property type="entry name" value="Heat shock 70 kDa"/>
    <property type="match status" value="1"/>
</dbReference>
<dbReference type="FunFam" id="3.30.420.40:FF:000172">
    <property type="entry name" value="Heat shock 70 kDa protein"/>
    <property type="match status" value="1"/>
</dbReference>
<dbReference type="FunFam" id="3.90.640.10:FF:000058">
    <property type="entry name" value="Heat shock 70 kDa protein"/>
    <property type="match status" value="1"/>
</dbReference>
<dbReference type="FunFam" id="3.30.30.30:FF:000001">
    <property type="entry name" value="heat shock 70 kDa protein-like"/>
    <property type="match status" value="1"/>
</dbReference>
<dbReference type="FunFam" id="1.20.1270.10:FF:000016">
    <property type="entry name" value="Heat shock protein 70"/>
    <property type="match status" value="1"/>
</dbReference>
<dbReference type="FunFam" id="3.30.420.40:FF:000026">
    <property type="entry name" value="Heat shock protein 70"/>
    <property type="match status" value="1"/>
</dbReference>
<dbReference type="Gene3D" id="1.20.1270.10">
    <property type="match status" value="1"/>
</dbReference>
<dbReference type="Gene3D" id="3.30.30.30">
    <property type="match status" value="1"/>
</dbReference>
<dbReference type="Gene3D" id="3.30.420.40">
    <property type="match status" value="2"/>
</dbReference>
<dbReference type="Gene3D" id="3.90.640.10">
    <property type="entry name" value="Actin, Chain A, domain 4"/>
    <property type="match status" value="1"/>
</dbReference>
<dbReference type="Gene3D" id="2.60.34.10">
    <property type="entry name" value="Substrate Binding Domain Of DNAk, Chain A, domain 1"/>
    <property type="match status" value="1"/>
</dbReference>
<dbReference type="InterPro" id="IPR043129">
    <property type="entry name" value="ATPase_NBD"/>
</dbReference>
<dbReference type="InterPro" id="IPR018181">
    <property type="entry name" value="Heat_shock_70_CS"/>
</dbReference>
<dbReference type="InterPro" id="IPR029048">
    <property type="entry name" value="HSP70_C_sf"/>
</dbReference>
<dbReference type="InterPro" id="IPR029047">
    <property type="entry name" value="HSP70_peptide-bd_sf"/>
</dbReference>
<dbReference type="InterPro" id="IPR013126">
    <property type="entry name" value="Hsp_70_fam"/>
</dbReference>
<dbReference type="NCBIfam" id="NF001413">
    <property type="entry name" value="PRK00290.1"/>
    <property type="match status" value="1"/>
</dbReference>
<dbReference type="PANTHER" id="PTHR19375">
    <property type="entry name" value="HEAT SHOCK PROTEIN 70KDA"/>
    <property type="match status" value="1"/>
</dbReference>
<dbReference type="Pfam" id="PF00012">
    <property type="entry name" value="HSP70"/>
    <property type="match status" value="1"/>
</dbReference>
<dbReference type="PRINTS" id="PR00301">
    <property type="entry name" value="HEATSHOCK70"/>
</dbReference>
<dbReference type="SUPFAM" id="SSF53067">
    <property type="entry name" value="Actin-like ATPase domain"/>
    <property type="match status" value="2"/>
</dbReference>
<dbReference type="SUPFAM" id="SSF100934">
    <property type="entry name" value="Heat shock protein 70kD (HSP70), C-terminal subdomain"/>
    <property type="match status" value="1"/>
</dbReference>
<dbReference type="SUPFAM" id="SSF100920">
    <property type="entry name" value="Heat shock protein 70kD (HSP70), peptide-binding domain"/>
    <property type="match status" value="1"/>
</dbReference>
<dbReference type="PROSITE" id="PS00297">
    <property type="entry name" value="HSP70_1"/>
    <property type="match status" value="1"/>
</dbReference>
<dbReference type="PROSITE" id="PS01036">
    <property type="entry name" value="HSP70_3"/>
    <property type="match status" value="1"/>
</dbReference>
<protein>
    <recommendedName>
        <fullName>Heat shock 70 kDa protein</fullName>
    </recommendedName>
    <alternativeName>
        <fullName>Allergen Cla h IV</fullName>
    </alternativeName>
    <allergenName>Cla h 4</allergenName>
</protein>
<proteinExistence type="evidence at protein level"/>
<comment type="allergen">
    <text>Causes an allergic reaction in human.</text>
</comment>
<comment type="similarity">
    <text evidence="2">Belongs to the heat shock protein 70 family.</text>
</comment>
<feature type="chain" id="PRO_0000078368" description="Heat shock 70 kDa protein">
    <location>
        <begin position="1"/>
        <end position="643"/>
    </location>
</feature>
<feature type="region of interest" description="Disordered" evidence="1">
    <location>
        <begin position="612"/>
        <end position="643"/>
    </location>
</feature>
<feature type="compositionally biased region" description="Gly residues" evidence="1">
    <location>
        <begin position="612"/>
        <end position="625"/>
    </location>
</feature>